<comment type="function">
    <text evidence="1">Catalyzes the conversion of 3-deoxy-D-arabino-heptulosonate 7-phosphate (DAHP) to dehydroquinate (DHQ).</text>
</comment>
<comment type="catalytic activity">
    <reaction evidence="1">
        <text>7-phospho-2-dehydro-3-deoxy-D-arabino-heptonate = 3-dehydroquinate + phosphate</text>
        <dbReference type="Rhea" id="RHEA:21968"/>
        <dbReference type="ChEBI" id="CHEBI:32364"/>
        <dbReference type="ChEBI" id="CHEBI:43474"/>
        <dbReference type="ChEBI" id="CHEBI:58394"/>
        <dbReference type="EC" id="4.2.3.4"/>
    </reaction>
</comment>
<comment type="cofactor">
    <cofactor evidence="1">
        <name>Co(2+)</name>
        <dbReference type="ChEBI" id="CHEBI:48828"/>
    </cofactor>
    <cofactor evidence="1">
        <name>Zn(2+)</name>
        <dbReference type="ChEBI" id="CHEBI:29105"/>
    </cofactor>
    <text evidence="1">Binds 1 divalent metal cation per subunit. Can use either Co(2+) or Zn(2+).</text>
</comment>
<comment type="cofactor">
    <cofactor evidence="1">
        <name>NAD(+)</name>
        <dbReference type="ChEBI" id="CHEBI:57540"/>
    </cofactor>
</comment>
<comment type="pathway">
    <text evidence="1">Metabolic intermediate biosynthesis; chorismate biosynthesis; chorismate from D-erythrose 4-phosphate and phosphoenolpyruvate: step 2/7.</text>
</comment>
<comment type="subcellular location">
    <subcellularLocation>
        <location evidence="1">Cytoplasm</location>
    </subcellularLocation>
</comment>
<comment type="similarity">
    <text evidence="1">Belongs to the sugar phosphate cyclases superfamily. Dehydroquinate synthase family.</text>
</comment>
<keyword id="KW-0028">Amino-acid biosynthesis</keyword>
<keyword id="KW-0057">Aromatic amino acid biosynthesis</keyword>
<keyword id="KW-0170">Cobalt</keyword>
<keyword id="KW-0963">Cytoplasm</keyword>
<keyword id="KW-0456">Lyase</keyword>
<keyword id="KW-0479">Metal-binding</keyword>
<keyword id="KW-0520">NAD</keyword>
<keyword id="KW-0547">Nucleotide-binding</keyword>
<keyword id="KW-0862">Zinc</keyword>
<evidence type="ECO:0000255" key="1">
    <source>
        <dbReference type="HAMAP-Rule" id="MF_00110"/>
    </source>
</evidence>
<organism>
    <name type="scientific">Hamiltonella defensa subsp. Acyrthosiphon pisum (strain 5AT)</name>
    <dbReference type="NCBI Taxonomy" id="572265"/>
    <lineage>
        <taxon>Bacteria</taxon>
        <taxon>Pseudomonadati</taxon>
        <taxon>Pseudomonadota</taxon>
        <taxon>Gammaproteobacteria</taxon>
        <taxon>Enterobacterales</taxon>
        <taxon>Enterobacteriaceae</taxon>
        <taxon>aphid secondary symbionts</taxon>
        <taxon>Candidatus Hamiltonella</taxon>
    </lineage>
</organism>
<dbReference type="EC" id="4.2.3.4" evidence="1"/>
<dbReference type="EMBL" id="CP001277">
    <property type="protein sequence ID" value="ACQ68252.1"/>
    <property type="molecule type" value="Genomic_DNA"/>
</dbReference>
<dbReference type="RefSeq" id="WP_015874019.1">
    <property type="nucleotide sequence ID" value="NC_012751.1"/>
</dbReference>
<dbReference type="SMR" id="C4K6Q9"/>
<dbReference type="STRING" id="572265.HDEF_1640"/>
<dbReference type="GeneID" id="66261246"/>
<dbReference type="KEGG" id="hde:HDEF_1640"/>
<dbReference type="eggNOG" id="COG0337">
    <property type="taxonomic scope" value="Bacteria"/>
</dbReference>
<dbReference type="HOGENOM" id="CLU_001201_0_2_6"/>
<dbReference type="UniPathway" id="UPA00053">
    <property type="reaction ID" value="UER00085"/>
</dbReference>
<dbReference type="Proteomes" id="UP000002334">
    <property type="component" value="Chromosome"/>
</dbReference>
<dbReference type="GO" id="GO:0005737">
    <property type="term" value="C:cytoplasm"/>
    <property type="evidence" value="ECO:0007669"/>
    <property type="project" value="UniProtKB-SubCell"/>
</dbReference>
<dbReference type="GO" id="GO:0003856">
    <property type="term" value="F:3-dehydroquinate synthase activity"/>
    <property type="evidence" value="ECO:0007669"/>
    <property type="project" value="UniProtKB-UniRule"/>
</dbReference>
<dbReference type="GO" id="GO:0046872">
    <property type="term" value="F:metal ion binding"/>
    <property type="evidence" value="ECO:0007669"/>
    <property type="project" value="UniProtKB-KW"/>
</dbReference>
<dbReference type="GO" id="GO:0000166">
    <property type="term" value="F:nucleotide binding"/>
    <property type="evidence" value="ECO:0007669"/>
    <property type="project" value="UniProtKB-KW"/>
</dbReference>
<dbReference type="GO" id="GO:0008652">
    <property type="term" value="P:amino acid biosynthetic process"/>
    <property type="evidence" value="ECO:0007669"/>
    <property type="project" value="UniProtKB-KW"/>
</dbReference>
<dbReference type="GO" id="GO:0009073">
    <property type="term" value="P:aromatic amino acid family biosynthetic process"/>
    <property type="evidence" value="ECO:0007669"/>
    <property type="project" value="UniProtKB-KW"/>
</dbReference>
<dbReference type="GO" id="GO:0009423">
    <property type="term" value="P:chorismate biosynthetic process"/>
    <property type="evidence" value="ECO:0007669"/>
    <property type="project" value="UniProtKB-UniRule"/>
</dbReference>
<dbReference type="CDD" id="cd08195">
    <property type="entry name" value="DHQS"/>
    <property type="match status" value="1"/>
</dbReference>
<dbReference type="FunFam" id="3.40.50.1970:FF:000001">
    <property type="entry name" value="3-dehydroquinate synthase"/>
    <property type="match status" value="1"/>
</dbReference>
<dbReference type="Gene3D" id="3.40.50.1970">
    <property type="match status" value="1"/>
</dbReference>
<dbReference type="Gene3D" id="1.20.1090.10">
    <property type="entry name" value="Dehydroquinate synthase-like - alpha domain"/>
    <property type="match status" value="1"/>
</dbReference>
<dbReference type="HAMAP" id="MF_00110">
    <property type="entry name" value="DHQ_synthase"/>
    <property type="match status" value="1"/>
</dbReference>
<dbReference type="InterPro" id="IPR050071">
    <property type="entry name" value="Dehydroquinate_synthase"/>
</dbReference>
<dbReference type="InterPro" id="IPR016037">
    <property type="entry name" value="DHQ_synth_AroB"/>
</dbReference>
<dbReference type="InterPro" id="IPR030963">
    <property type="entry name" value="DHQ_synth_fam"/>
</dbReference>
<dbReference type="InterPro" id="IPR030960">
    <property type="entry name" value="DHQS/DOIS_N"/>
</dbReference>
<dbReference type="InterPro" id="IPR056179">
    <property type="entry name" value="DHQS_C"/>
</dbReference>
<dbReference type="NCBIfam" id="TIGR01357">
    <property type="entry name" value="aroB"/>
    <property type="match status" value="1"/>
</dbReference>
<dbReference type="PANTHER" id="PTHR43622">
    <property type="entry name" value="3-DEHYDROQUINATE SYNTHASE"/>
    <property type="match status" value="1"/>
</dbReference>
<dbReference type="PANTHER" id="PTHR43622:SF7">
    <property type="entry name" value="3-DEHYDROQUINATE SYNTHASE, CHLOROPLASTIC"/>
    <property type="match status" value="1"/>
</dbReference>
<dbReference type="Pfam" id="PF01761">
    <property type="entry name" value="DHQ_synthase"/>
    <property type="match status" value="1"/>
</dbReference>
<dbReference type="Pfam" id="PF24621">
    <property type="entry name" value="DHQS_C"/>
    <property type="match status" value="1"/>
</dbReference>
<dbReference type="PIRSF" id="PIRSF001455">
    <property type="entry name" value="DHQ_synth"/>
    <property type="match status" value="1"/>
</dbReference>
<dbReference type="SUPFAM" id="SSF56796">
    <property type="entry name" value="Dehydroquinate synthase-like"/>
    <property type="match status" value="1"/>
</dbReference>
<proteinExistence type="inferred from homology"/>
<gene>
    <name evidence="1" type="primary">aroB</name>
    <name type="ordered locus">HDEF_1640</name>
</gene>
<reference key="1">
    <citation type="journal article" date="2009" name="Proc. Natl. Acad. Sci. U.S.A.">
        <title>Hamiltonella defensa, genome evolution of protective bacterial endosymbiont from pathogenic ancestors.</title>
        <authorList>
            <person name="Degnan P.H."/>
            <person name="Yu Y."/>
            <person name="Sisneros N."/>
            <person name="Wing R.A."/>
            <person name="Moran N.A."/>
        </authorList>
    </citation>
    <scope>NUCLEOTIDE SEQUENCE [LARGE SCALE GENOMIC DNA]</scope>
    <source>
        <strain>5AT</strain>
    </source>
</reference>
<sequence length="362" mass="40344">MKKMTITLGPRNYPITISSGLLNHFDSFEPLKKGDQGMLVTNQTLAPLYLSSIRTVLEQGGVRLDHIILPDGEKYKSLASIELIFTELLKKWHGRHTTLIAFGGGVIGDLTGFAAACYQRGIRYIQIPTTLLAQVDASIGGKTAVNHQLGKNMIGAFYQPASVIIDIDCLSHLPLRHFSSGLAEAIKYGIAFDFDFFCWLEANMDSLLRRDVDALSHCISRCCQIKSKIVMEDERDENGLRALLNLGHTYAHAIETETNYIFYLHGEAVSIGMLMAAQTAQKLGLFSKTDIIRIKKLLLRAKLPIQGFHQIDPKSCLLHMMHDKKVMNDKLRLIIPTAIGQSEIYEGIDNDIVLASIKETLM</sequence>
<name>AROB_HAMD5</name>
<accession>C4K6Q9</accession>
<protein>
    <recommendedName>
        <fullName evidence="1">3-dehydroquinate synthase</fullName>
        <shortName evidence="1">DHQS</shortName>
        <ecNumber evidence="1">4.2.3.4</ecNumber>
    </recommendedName>
</protein>
<feature type="chain" id="PRO_1000202912" description="3-dehydroquinate synthase">
    <location>
        <begin position="1"/>
        <end position="362"/>
    </location>
</feature>
<feature type="binding site" evidence="1">
    <location>
        <begin position="71"/>
        <end position="76"/>
    </location>
    <ligand>
        <name>NAD(+)</name>
        <dbReference type="ChEBI" id="CHEBI:57540"/>
    </ligand>
</feature>
<feature type="binding site" evidence="1">
    <location>
        <begin position="105"/>
        <end position="109"/>
    </location>
    <ligand>
        <name>NAD(+)</name>
        <dbReference type="ChEBI" id="CHEBI:57540"/>
    </ligand>
</feature>
<feature type="binding site" evidence="1">
    <location>
        <begin position="129"/>
        <end position="130"/>
    </location>
    <ligand>
        <name>NAD(+)</name>
        <dbReference type="ChEBI" id="CHEBI:57540"/>
    </ligand>
</feature>
<feature type="binding site" evidence="1">
    <location>
        <position position="142"/>
    </location>
    <ligand>
        <name>NAD(+)</name>
        <dbReference type="ChEBI" id="CHEBI:57540"/>
    </ligand>
</feature>
<feature type="binding site" evidence="1">
    <location>
        <position position="151"/>
    </location>
    <ligand>
        <name>NAD(+)</name>
        <dbReference type="ChEBI" id="CHEBI:57540"/>
    </ligand>
</feature>
<feature type="binding site" evidence="1">
    <location>
        <position position="184"/>
    </location>
    <ligand>
        <name>Zn(2+)</name>
        <dbReference type="ChEBI" id="CHEBI:29105"/>
    </ligand>
</feature>
<feature type="binding site" evidence="1">
    <location>
        <position position="248"/>
    </location>
    <ligand>
        <name>Zn(2+)</name>
        <dbReference type="ChEBI" id="CHEBI:29105"/>
    </ligand>
</feature>
<feature type="binding site" evidence="1">
    <location>
        <position position="265"/>
    </location>
    <ligand>
        <name>Zn(2+)</name>
        <dbReference type="ChEBI" id="CHEBI:29105"/>
    </ligand>
</feature>